<sequence length="349" mass="37517">MEPTSGFAEQPGPVKAESEEQEPAQWQALPVLSEQQSGAVELILAYAAPVLDKRQTSRLLREVSAVYPLPAQPHLKRVRPSRSAGGAQSSDLLLCLAGPSAGPRSLAELLPRPAVDPRGLGTPFLVPVPARPPLTRSQFEEARAHWPTSFHEDKQVTSALAGQLFSTQERAAMQTHMERAVCAAQRAAAQGLRAVGAVVVDPASDRVLATGHDCSSVASPLLHAVMVCIDLVAQGQGRGSCDLRSHPACSFTQATATQGARAGSVRKLDEDSLPYVCTGYDLYVTREPCVMCAMALVHARIQRVFYGAPSPDGALGTLFRVHARPDLNHRFQVFRGILEDQCRQLDPDP</sequence>
<comment type="cofactor">
    <cofactor evidence="1">
        <name>Zn(2+)</name>
        <dbReference type="ChEBI" id="CHEBI:29105"/>
    </cofactor>
</comment>
<comment type="similarity">
    <text evidence="5">Belongs to the cytidine and deoxycytidylate deaminase family. ADAT3 subfamily.</text>
</comment>
<comment type="caution">
    <text evidence="5">Val-225 is present instead of the conserved Glu which is an active site in the cytidine and deoxycytidylate deaminase family of enzymes. It is suggested that this protein may act as a regulatory subunit.</text>
</comment>
<evidence type="ECO:0000250" key="1"/>
<evidence type="ECO:0000250" key="2">
    <source>
        <dbReference type="UniProtKB" id="Q96EY9"/>
    </source>
</evidence>
<evidence type="ECO:0000255" key="3">
    <source>
        <dbReference type="PROSITE-ProRule" id="PRU01083"/>
    </source>
</evidence>
<evidence type="ECO:0000256" key="4">
    <source>
        <dbReference type="SAM" id="MobiDB-lite"/>
    </source>
</evidence>
<evidence type="ECO:0000305" key="5"/>
<evidence type="ECO:0007829" key="6">
    <source>
        <dbReference type="PDB" id="7NZ7"/>
    </source>
</evidence>
<evidence type="ECO:0007829" key="7">
    <source>
        <dbReference type="PDB" id="7NZ8"/>
    </source>
</evidence>
<evidence type="ECO:0007829" key="8">
    <source>
        <dbReference type="PDB" id="7NZ9"/>
    </source>
</evidence>
<reference key="1">
    <citation type="journal article" date="2009" name="PLoS Biol.">
        <title>Lineage-specific biology revealed by a finished genome assembly of the mouse.</title>
        <authorList>
            <person name="Church D.M."/>
            <person name="Goodstadt L."/>
            <person name="Hillier L.W."/>
            <person name="Zody M.C."/>
            <person name="Goldstein S."/>
            <person name="She X."/>
            <person name="Bult C.J."/>
            <person name="Agarwala R."/>
            <person name="Cherry J.L."/>
            <person name="DiCuccio M."/>
            <person name="Hlavina W."/>
            <person name="Kapustin Y."/>
            <person name="Meric P."/>
            <person name="Maglott D."/>
            <person name="Birtle Z."/>
            <person name="Marques A.C."/>
            <person name="Graves T."/>
            <person name="Zhou S."/>
            <person name="Teague B."/>
            <person name="Potamousis K."/>
            <person name="Churas C."/>
            <person name="Place M."/>
            <person name="Herschleb J."/>
            <person name="Runnheim R."/>
            <person name="Forrest D."/>
            <person name="Amos-Landgraf J."/>
            <person name="Schwartz D.C."/>
            <person name="Cheng Z."/>
            <person name="Lindblad-Toh K."/>
            <person name="Eichler E.E."/>
            <person name="Ponting C.P."/>
        </authorList>
    </citation>
    <scope>NUCLEOTIDE SEQUENCE [LARGE SCALE GENOMIC DNA]</scope>
    <source>
        <strain>C57BL/6J</strain>
    </source>
</reference>
<reference key="2">
    <citation type="journal article" date="2004" name="Genome Res.">
        <title>The status, quality, and expansion of the NIH full-length cDNA project: the Mammalian Gene Collection (MGC).</title>
        <authorList>
            <consortium name="The MGC Project Team"/>
        </authorList>
    </citation>
    <scope>NUCLEOTIDE SEQUENCE [LARGE SCALE MRNA] OF 1-162</scope>
    <source>
        <strain>C57BL/6J</strain>
        <tissue>Brain</tissue>
    </source>
</reference>
<reference key="3">
    <citation type="journal article" date="2005" name="Science">
        <title>The transcriptional landscape of the mammalian genome.</title>
        <authorList>
            <person name="Carninci P."/>
            <person name="Kasukawa T."/>
            <person name="Katayama S."/>
            <person name="Gough J."/>
            <person name="Frith M.C."/>
            <person name="Maeda N."/>
            <person name="Oyama R."/>
            <person name="Ravasi T."/>
            <person name="Lenhard B."/>
            <person name="Wells C."/>
            <person name="Kodzius R."/>
            <person name="Shimokawa K."/>
            <person name="Bajic V.B."/>
            <person name="Brenner S.E."/>
            <person name="Batalov S."/>
            <person name="Forrest A.R."/>
            <person name="Zavolan M."/>
            <person name="Davis M.J."/>
            <person name="Wilming L.G."/>
            <person name="Aidinis V."/>
            <person name="Allen J.E."/>
            <person name="Ambesi-Impiombato A."/>
            <person name="Apweiler R."/>
            <person name="Aturaliya R.N."/>
            <person name="Bailey T.L."/>
            <person name="Bansal M."/>
            <person name="Baxter L."/>
            <person name="Beisel K.W."/>
            <person name="Bersano T."/>
            <person name="Bono H."/>
            <person name="Chalk A.M."/>
            <person name="Chiu K.P."/>
            <person name="Choudhary V."/>
            <person name="Christoffels A."/>
            <person name="Clutterbuck D.R."/>
            <person name="Crowe M.L."/>
            <person name="Dalla E."/>
            <person name="Dalrymple B.P."/>
            <person name="de Bono B."/>
            <person name="Della Gatta G."/>
            <person name="di Bernardo D."/>
            <person name="Down T."/>
            <person name="Engstrom P."/>
            <person name="Fagiolini M."/>
            <person name="Faulkner G."/>
            <person name="Fletcher C.F."/>
            <person name="Fukushima T."/>
            <person name="Furuno M."/>
            <person name="Futaki S."/>
            <person name="Gariboldi M."/>
            <person name="Georgii-Hemming P."/>
            <person name="Gingeras T.R."/>
            <person name="Gojobori T."/>
            <person name="Green R.E."/>
            <person name="Gustincich S."/>
            <person name="Harbers M."/>
            <person name="Hayashi Y."/>
            <person name="Hensch T.K."/>
            <person name="Hirokawa N."/>
            <person name="Hill D."/>
            <person name="Huminiecki L."/>
            <person name="Iacono M."/>
            <person name="Ikeo K."/>
            <person name="Iwama A."/>
            <person name="Ishikawa T."/>
            <person name="Jakt M."/>
            <person name="Kanapin A."/>
            <person name="Katoh M."/>
            <person name="Kawasawa Y."/>
            <person name="Kelso J."/>
            <person name="Kitamura H."/>
            <person name="Kitano H."/>
            <person name="Kollias G."/>
            <person name="Krishnan S.P."/>
            <person name="Kruger A."/>
            <person name="Kummerfeld S.K."/>
            <person name="Kurochkin I.V."/>
            <person name="Lareau L.F."/>
            <person name="Lazarevic D."/>
            <person name="Lipovich L."/>
            <person name="Liu J."/>
            <person name="Liuni S."/>
            <person name="McWilliam S."/>
            <person name="Madan Babu M."/>
            <person name="Madera M."/>
            <person name="Marchionni L."/>
            <person name="Matsuda H."/>
            <person name="Matsuzawa S."/>
            <person name="Miki H."/>
            <person name="Mignone F."/>
            <person name="Miyake S."/>
            <person name="Morris K."/>
            <person name="Mottagui-Tabar S."/>
            <person name="Mulder N."/>
            <person name="Nakano N."/>
            <person name="Nakauchi H."/>
            <person name="Ng P."/>
            <person name="Nilsson R."/>
            <person name="Nishiguchi S."/>
            <person name="Nishikawa S."/>
            <person name="Nori F."/>
            <person name="Ohara O."/>
            <person name="Okazaki Y."/>
            <person name="Orlando V."/>
            <person name="Pang K.C."/>
            <person name="Pavan W.J."/>
            <person name="Pavesi G."/>
            <person name="Pesole G."/>
            <person name="Petrovsky N."/>
            <person name="Piazza S."/>
            <person name="Reed J."/>
            <person name="Reid J.F."/>
            <person name="Ring B.Z."/>
            <person name="Ringwald M."/>
            <person name="Rost B."/>
            <person name="Ruan Y."/>
            <person name="Salzberg S.L."/>
            <person name="Sandelin A."/>
            <person name="Schneider C."/>
            <person name="Schoenbach C."/>
            <person name="Sekiguchi K."/>
            <person name="Semple C.A."/>
            <person name="Seno S."/>
            <person name="Sessa L."/>
            <person name="Sheng Y."/>
            <person name="Shibata Y."/>
            <person name="Shimada H."/>
            <person name="Shimada K."/>
            <person name="Silva D."/>
            <person name="Sinclair B."/>
            <person name="Sperling S."/>
            <person name="Stupka E."/>
            <person name="Sugiura K."/>
            <person name="Sultana R."/>
            <person name="Takenaka Y."/>
            <person name="Taki K."/>
            <person name="Tammoja K."/>
            <person name="Tan S.L."/>
            <person name="Tang S."/>
            <person name="Taylor M.S."/>
            <person name="Tegner J."/>
            <person name="Teichmann S.A."/>
            <person name="Ueda H.R."/>
            <person name="van Nimwegen E."/>
            <person name="Verardo R."/>
            <person name="Wei C.L."/>
            <person name="Yagi K."/>
            <person name="Yamanishi H."/>
            <person name="Zabarovsky E."/>
            <person name="Zhu S."/>
            <person name="Zimmer A."/>
            <person name="Hide W."/>
            <person name="Bult C."/>
            <person name="Grimmond S.M."/>
            <person name="Teasdale R.D."/>
            <person name="Liu E.T."/>
            <person name="Brusic V."/>
            <person name="Quackenbush J."/>
            <person name="Wahlestedt C."/>
            <person name="Mattick J.S."/>
            <person name="Hume D.A."/>
            <person name="Kai C."/>
            <person name="Sasaki D."/>
            <person name="Tomaru Y."/>
            <person name="Fukuda S."/>
            <person name="Kanamori-Katayama M."/>
            <person name="Suzuki M."/>
            <person name="Aoki J."/>
            <person name="Arakawa T."/>
            <person name="Iida J."/>
            <person name="Imamura K."/>
            <person name="Itoh M."/>
            <person name="Kato T."/>
            <person name="Kawaji H."/>
            <person name="Kawagashira N."/>
            <person name="Kawashima T."/>
            <person name="Kojima M."/>
            <person name="Kondo S."/>
            <person name="Konno H."/>
            <person name="Nakano K."/>
            <person name="Ninomiya N."/>
            <person name="Nishio T."/>
            <person name="Okada M."/>
            <person name="Plessy C."/>
            <person name="Shibata K."/>
            <person name="Shiraki T."/>
            <person name="Suzuki S."/>
            <person name="Tagami M."/>
            <person name="Waki K."/>
            <person name="Watahiki A."/>
            <person name="Okamura-Oho Y."/>
            <person name="Suzuki H."/>
            <person name="Kawai J."/>
            <person name="Hayashizaki Y."/>
        </authorList>
    </citation>
    <scope>NUCLEOTIDE SEQUENCE [LARGE SCALE MRNA] OF 87-349</scope>
</reference>
<reference key="4">
    <citation type="journal article" date="2010" name="Cell">
        <title>A tissue-specific atlas of mouse protein phosphorylation and expression.</title>
        <authorList>
            <person name="Huttlin E.L."/>
            <person name="Jedrychowski M.P."/>
            <person name="Elias J.E."/>
            <person name="Goswami T."/>
            <person name="Rad R."/>
            <person name="Beausoleil S.A."/>
            <person name="Villen J."/>
            <person name="Haas W."/>
            <person name="Sowa M.E."/>
            <person name="Gygi S.P."/>
        </authorList>
    </citation>
    <scope>IDENTIFICATION BY MASS SPECTROMETRY [LARGE SCALE ANALYSIS]</scope>
    <source>
        <tissue>Spleen</tissue>
        <tissue>Testis</tissue>
    </source>
</reference>
<keyword id="KW-0002">3D-structure</keyword>
<keyword id="KW-0007">Acetylation</keyword>
<keyword id="KW-0479">Metal-binding</keyword>
<keyword id="KW-1185">Reference proteome</keyword>
<keyword id="KW-0819">tRNA processing</keyword>
<keyword id="KW-0862">Zinc</keyword>
<gene>
    <name type="primary">Adat3</name>
</gene>
<feature type="chain" id="PRO_0000287659" description="Probable inactive tRNA-specific adenosine deaminase-like protein 3">
    <location>
        <begin position="1"/>
        <end position="349"/>
    </location>
</feature>
<feature type="domain" description="CMP/dCMP-type deaminase" evidence="3">
    <location>
        <begin position="171"/>
        <end position="334"/>
    </location>
</feature>
<feature type="region of interest" description="Disordered" evidence="4">
    <location>
        <begin position="1"/>
        <end position="25"/>
    </location>
</feature>
<feature type="binding site" evidence="1">
    <location>
        <position position="223"/>
    </location>
    <ligand>
        <name>Zn(2+)</name>
        <dbReference type="ChEBI" id="CHEBI:29105"/>
    </ligand>
</feature>
<feature type="binding site" evidence="1">
    <location>
        <position position="289"/>
    </location>
    <ligand>
        <name>Zn(2+)</name>
        <dbReference type="ChEBI" id="CHEBI:29105"/>
    </ligand>
</feature>
<feature type="binding site" evidence="1">
    <location>
        <position position="292"/>
    </location>
    <ligand>
        <name>Zn(2+)</name>
        <dbReference type="ChEBI" id="CHEBI:29105"/>
    </ligand>
</feature>
<feature type="modified residue" description="N-acetylmethionine" evidence="2">
    <location>
        <position position="1"/>
    </location>
</feature>
<feature type="sequence conflict" description="In Ref. 3; AK020747." evidence="5" ref="3">
    <original>A</original>
    <variation>T</variation>
    <location>
        <position position="87"/>
    </location>
</feature>
<feature type="strand" evidence="6">
    <location>
        <begin position="29"/>
        <end position="31"/>
    </location>
</feature>
<feature type="helix" evidence="8">
    <location>
        <begin position="34"/>
        <end position="37"/>
    </location>
</feature>
<feature type="strand" evidence="8">
    <location>
        <begin position="42"/>
        <end position="52"/>
    </location>
</feature>
<feature type="helix" evidence="8">
    <location>
        <begin position="53"/>
        <end position="55"/>
    </location>
</feature>
<feature type="helix" evidence="8">
    <location>
        <begin position="56"/>
        <end position="66"/>
    </location>
</feature>
<feature type="strand" evidence="8">
    <location>
        <begin position="77"/>
        <end position="82"/>
    </location>
</feature>
<feature type="strand" evidence="8">
    <location>
        <begin position="88"/>
        <end position="96"/>
    </location>
</feature>
<feature type="helix" evidence="8">
    <location>
        <begin position="106"/>
        <end position="109"/>
    </location>
</feature>
<feature type="turn" evidence="8">
    <location>
        <begin position="112"/>
        <end position="114"/>
    </location>
</feature>
<feature type="strand" evidence="8">
    <location>
        <begin position="124"/>
        <end position="131"/>
    </location>
</feature>
<feature type="helix" evidence="8">
    <location>
        <begin position="136"/>
        <end position="145"/>
    </location>
</feature>
<feature type="helix" evidence="8">
    <location>
        <begin position="167"/>
        <end position="190"/>
    </location>
</feature>
<feature type="strand" evidence="8">
    <location>
        <begin position="196"/>
        <end position="200"/>
    </location>
</feature>
<feature type="turn" evidence="8">
    <location>
        <begin position="202"/>
        <end position="204"/>
    </location>
</feature>
<feature type="strand" evidence="8">
    <location>
        <begin position="207"/>
        <end position="212"/>
    </location>
</feature>
<feature type="helix" evidence="8">
    <location>
        <begin position="224"/>
        <end position="234"/>
    </location>
</feature>
<feature type="turn" evidence="8">
    <location>
        <begin position="276"/>
        <end position="279"/>
    </location>
</feature>
<feature type="strand" evidence="8">
    <location>
        <begin position="281"/>
        <end position="286"/>
    </location>
</feature>
<feature type="helix" evidence="8">
    <location>
        <begin position="290"/>
        <end position="299"/>
    </location>
</feature>
<feature type="strand" evidence="8">
    <location>
        <begin position="302"/>
        <end position="308"/>
    </location>
</feature>
<feature type="strand" evidence="7">
    <location>
        <begin position="325"/>
        <end position="328"/>
    </location>
</feature>
<feature type="strand" evidence="8">
    <location>
        <begin position="332"/>
        <end position="335"/>
    </location>
</feature>
<feature type="helix" evidence="8">
    <location>
        <begin position="339"/>
        <end position="342"/>
    </location>
</feature>
<dbReference type="EMBL" id="AC152058">
    <property type="status" value="NOT_ANNOTATED_CDS"/>
    <property type="molecule type" value="Genomic_DNA"/>
</dbReference>
<dbReference type="EMBL" id="BC060071">
    <property type="status" value="NOT_ANNOTATED_CDS"/>
    <property type="molecule type" value="mRNA"/>
</dbReference>
<dbReference type="EMBL" id="CA325386">
    <property type="status" value="NOT_ANNOTATED_CDS"/>
    <property type="molecule type" value="mRNA"/>
</dbReference>
<dbReference type="EMBL" id="AK020747">
    <property type="status" value="NOT_ANNOTATED_CDS"/>
    <property type="molecule type" value="mRNA"/>
</dbReference>
<dbReference type="CCDS" id="CCDS48637.1"/>
<dbReference type="RefSeq" id="NP_001094076.1">
    <property type="nucleotide sequence ID" value="NM_001100606.1"/>
</dbReference>
<dbReference type="PDB" id="7NZ7">
    <property type="method" value="X-ray"/>
    <property type="resolution" value="2.96 A"/>
    <property type="chains" value="B=1-349"/>
</dbReference>
<dbReference type="PDB" id="7NZ8">
    <property type="method" value="X-ray"/>
    <property type="resolution" value="2.12 A"/>
    <property type="chains" value="B=1-349"/>
</dbReference>
<dbReference type="PDB" id="7NZ9">
    <property type="method" value="X-ray"/>
    <property type="resolution" value="1.99 A"/>
    <property type="chains" value="B=1-349"/>
</dbReference>
<dbReference type="PDBsum" id="7NZ7"/>
<dbReference type="PDBsum" id="7NZ8"/>
<dbReference type="PDBsum" id="7NZ9"/>
<dbReference type="SMR" id="Q6PAT0"/>
<dbReference type="FunCoup" id="Q6PAT0">
    <property type="interactions" value="2198"/>
</dbReference>
<dbReference type="STRING" id="10090.ENSMUSP00000040551"/>
<dbReference type="iPTMnet" id="Q6PAT0"/>
<dbReference type="PhosphoSitePlus" id="Q6PAT0"/>
<dbReference type="SwissPalm" id="Q6PAT0"/>
<dbReference type="PaxDb" id="10090-ENSMUSP00000136259"/>
<dbReference type="PeptideAtlas" id="Q6PAT0"/>
<dbReference type="ProteomicsDB" id="285553"/>
<dbReference type="Pumba" id="Q6PAT0"/>
<dbReference type="Ensembl" id="ENSMUST00000038411.5">
    <property type="protein sequence ID" value="ENSMUSP00000040551.5"/>
    <property type="gene ID" value="ENSMUSG00000113640.2"/>
</dbReference>
<dbReference type="Ensembl" id="ENSMUST00000178231.2">
    <property type="protein sequence ID" value="ENSMUSP00000136259.2"/>
    <property type="gene ID" value="ENSMUSG00000035370.10"/>
</dbReference>
<dbReference type="Ensembl" id="ENSMUST00000218067.2">
    <property type="protein sequence ID" value="ENSMUSP00000151394.2"/>
    <property type="gene ID" value="ENSMUSG00000035370.10"/>
</dbReference>
<dbReference type="GeneID" id="100113398"/>
<dbReference type="KEGG" id="mmu:100113398"/>
<dbReference type="UCSC" id="uc007gdx.1">
    <property type="organism name" value="mouse"/>
</dbReference>
<dbReference type="AGR" id="MGI:1924344"/>
<dbReference type="CTD" id="113179"/>
<dbReference type="MGI" id="MGI:1924344">
    <property type="gene designation" value="Adat3"/>
</dbReference>
<dbReference type="VEuPathDB" id="HostDB:ENSMUSG00000035370"/>
<dbReference type="VEuPathDB" id="HostDB:ENSMUSG00000113640"/>
<dbReference type="eggNOG" id="KOG2771">
    <property type="taxonomic scope" value="Eukaryota"/>
</dbReference>
<dbReference type="GeneTree" id="ENSGT00390000010706"/>
<dbReference type="HOGENOM" id="CLU_013817_2_1_1"/>
<dbReference type="InParanoid" id="Q6PAT0"/>
<dbReference type="OMA" id="QHWPTSF"/>
<dbReference type="OrthoDB" id="3180714at2759"/>
<dbReference type="PhylomeDB" id="Q6PAT0"/>
<dbReference type="TreeFam" id="TF313277"/>
<dbReference type="BioGRID-ORCS" id="100113398">
    <property type="hits" value="25 hits in 80 CRISPR screens"/>
</dbReference>
<dbReference type="PRO" id="PR:Q6PAT0"/>
<dbReference type="Proteomes" id="UP000000589">
    <property type="component" value="Chromosome 10"/>
</dbReference>
<dbReference type="RNAct" id="Q6PAT0">
    <property type="molecule type" value="protein"/>
</dbReference>
<dbReference type="Bgee" id="ENSMUSG00000035370">
    <property type="expression patterns" value="Expressed in ascending aorta and 66 other cell types or tissues"/>
</dbReference>
<dbReference type="ExpressionAtlas" id="Q6PAT0">
    <property type="expression patterns" value="baseline"/>
</dbReference>
<dbReference type="GO" id="GO:0003824">
    <property type="term" value="F:catalytic activity"/>
    <property type="evidence" value="ECO:0007669"/>
    <property type="project" value="InterPro"/>
</dbReference>
<dbReference type="GO" id="GO:0046872">
    <property type="term" value="F:metal ion binding"/>
    <property type="evidence" value="ECO:0007669"/>
    <property type="project" value="UniProtKB-KW"/>
</dbReference>
<dbReference type="GO" id="GO:0008033">
    <property type="term" value="P:tRNA processing"/>
    <property type="evidence" value="ECO:0007669"/>
    <property type="project" value="UniProtKB-KW"/>
</dbReference>
<dbReference type="CDD" id="cd01285">
    <property type="entry name" value="nucleoside_deaminase"/>
    <property type="match status" value="1"/>
</dbReference>
<dbReference type="Gene3D" id="3.40.140.10">
    <property type="entry name" value="Cytidine Deaminase, domain 2"/>
    <property type="match status" value="1"/>
</dbReference>
<dbReference type="InterPro" id="IPR002125">
    <property type="entry name" value="CMP_dCMP_dom"/>
</dbReference>
<dbReference type="InterPro" id="IPR016193">
    <property type="entry name" value="Cytidine_deaminase-like"/>
</dbReference>
<dbReference type="PANTHER" id="PTHR11079">
    <property type="entry name" value="CYTOSINE DEAMINASE FAMILY MEMBER"/>
    <property type="match status" value="1"/>
</dbReference>
<dbReference type="PANTHER" id="PTHR11079:SF156">
    <property type="entry name" value="INACTIVE TRNA-SPECIFIC ADENOSINE DEAMINASE-LIKE PROTEIN 3-RELATED"/>
    <property type="match status" value="1"/>
</dbReference>
<dbReference type="Pfam" id="PF00383">
    <property type="entry name" value="dCMP_cyt_deam_1"/>
    <property type="match status" value="1"/>
</dbReference>
<dbReference type="SUPFAM" id="SSF53927">
    <property type="entry name" value="Cytidine deaminase-like"/>
    <property type="match status" value="1"/>
</dbReference>
<dbReference type="PROSITE" id="PS51747">
    <property type="entry name" value="CYT_DCMP_DEAMINASES_2"/>
    <property type="match status" value="1"/>
</dbReference>
<organism>
    <name type="scientific">Mus musculus</name>
    <name type="common">Mouse</name>
    <dbReference type="NCBI Taxonomy" id="10090"/>
    <lineage>
        <taxon>Eukaryota</taxon>
        <taxon>Metazoa</taxon>
        <taxon>Chordata</taxon>
        <taxon>Craniata</taxon>
        <taxon>Vertebrata</taxon>
        <taxon>Euteleostomi</taxon>
        <taxon>Mammalia</taxon>
        <taxon>Eutheria</taxon>
        <taxon>Euarchontoglires</taxon>
        <taxon>Glires</taxon>
        <taxon>Rodentia</taxon>
        <taxon>Myomorpha</taxon>
        <taxon>Muroidea</taxon>
        <taxon>Muridae</taxon>
        <taxon>Murinae</taxon>
        <taxon>Mus</taxon>
        <taxon>Mus</taxon>
    </lineage>
</organism>
<proteinExistence type="evidence at protein level"/>
<accession>Q6PAT0</accession>
<name>ADAT3_MOUSE</name>
<protein>
    <recommendedName>
        <fullName>Probable inactive tRNA-specific adenosine deaminase-like protein 3</fullName>
    </recommendedName>
    <alternativeName>
        <fullName>tRNA-specific adenosine-34 deaminase subunit ADAT3</fullName>
    </alternativeName>
</protein>